<gene>
    <name evidence="1" type="primary">psd</name>
    <name type="ordered locus">mlr7821</name>
</gene>
<name>PSD_RHILO</name>
<accession>Q984W0</accession>
<dbReference type="EC" id="4.1.1.65" evidence="1"/>
<dbReference type="EMBL" id="BA000012">
    <property type="protein sequence ID" value="BAB54203.1"/>
    <property type="molecule type" value="Genomic_DNA"/>
</dbReference>
<dbReference type="RefSeq" id="WP_010915147.1">
    <property type="nucleotide sequence ID" value="NC_002678.2"/>
</dbReference>
<dbReference type="KEGG" id="mlo:mlr7821"/>
<dbReference type="PATRIC" id="fig|266835.9.peg.6260"/>
<dbReference type="eggNOG" id="COG0688">
    <property type="taxonomic scope" value="Bacteria"/>
</dbReference>
<dbReference type="HOGENOM" id="CLU_072492_0_0_5"/>
<dbReference type="UniPathway" id="UPA00558">
    <property type="reaction ID" value="UER00616"/>
</dbReference>
<dbReference type="Proteomes" id="UP000000552">
    <property type="component" value="Chromosome"/>
</dbReference>
<dbReference type="GO" id="GO:0005886">
    <property type="term" value="C:plasma membrane"/>
    <property type="evidence" value="ECO:0007669"/>
    <property type="project" value="UniProtKB-SubCell"/>
</dbReference>
<dbReference type="GO" id="GO:0004609">
    <property type="term" value="F:phosphatidylserine decarboxylase activity"/>
    <property type="evidence" value="ECO:0007669"/>
    <property type="project" value="UniProtKB-UniRule"/>
</dbReference>
<dbReference type="GO" id="GO:0006646">
    <property type="term" value="P:phosphatidylethanolamine biosynthetic process"/>
    <property type="evidence" value="ECO:0007669"/>
    <property type="project" value="UniProtKB-UniRule"/>
</dbReference>
<dbReference type="HAMAP" id="MF_00664">
    <property type="entry name" value="PS_decarb_PSD_A"/>
    <property type="match status" value="1"/>
</dbReference>
<dbReference type="InterPro" id="IPR003817">
    <property type="entry name" value="PS_Dcarbxylase"/>
</dbReference>
<dbReference type="InterPro" id="IPR033175">
    <property type="entry name" value="PSD-A"/>
</dbReference>
<dbReference type="NCBIfam" id="NF003677">
    <property type="entry name" value="PRK05305.1-1"/>
    <property type="match status" value="1"/>
</dbReference>
<dbReference type="NCBIfam" id="NF003678">
    <property type="entry name" value="PRK05305.1-2"/>
    <property type="match status" value="1"/>
</dbReference>
<dbReference type="NCBIfam" id="NF003679">
    <property type="entry name" value="PRK05305.1-3"/>
    <property type="match status" value="1"/>
</dbReference>
<dbReference type="NCBIfam" id="NF003685">
    <property type="entry name" value="PRK05305.2-5"/>
    <property type="match status" value="1"/>
</dbReference>
<dbReference type="PANTHER" id="PTHR35809">
    <property type="entry name" value="ARCHAETIDYLSERINE DECARBOXYLASE PROENZYME-RELATED"/>
    <property type="match status" value="1"/>
</dbReference>
<dbReference type="PANTHER" id="PTHR35809:SF1">
    <property type="entry name" value="ARCHAETIDYLSERINE DECARBOXYLASE PROENZYME-RELATED"/>
    <property type="match status" value="1"/>
</dbReference>
<dbReference type="Pfam" id="PF02666">
    <property type="entry name" value="PS_Dcarbxylase"/>
    <property type="match status" value="1"/>
</dbReference>
<comment type="function">
    <text evidence="1">Catalyzes the formation of phosphatidylethanolamine (PtdEtn) from phosphatidylserine (PtdSer).</text>
</comment>
<comment type="catalytic activity">
    <reaction evidence="1">
        <text>a 1,2-diacyl-sn-glycero-3-phospho-L-serine + H(+) = a 1,2-diacyl-sn-glycero-3-phosphoethanolamine + CO2</text>
        <dbReference type="Rhea" id="RHEA:20828"/>
        <dbReference type="ChEBI" id="CHEBI:15378"/>
        <dbReference type="ChEBI" id="CHEBI:16526"/>
        <dbReference type="ChEBI" id="CHEBI:57262"/>
        <dbReference type="ChEBI" id="CHEBI:64612"/>
        <dbReference type="EC" id="4.1.1.65"/>
    </reaction>
</comment>
<comment type="cofactor">
    <cofactor evidence="1">
        <name>pyruvate</name>
        <dbReference type="ChEBI" id="CHEBI:15361"/>
    </cofactor>
    <text evidence="1">Binds 1 pyruvoyl group covalently per subunit.</text>
</comment>
<comment type="pathway">
    <text evidence="1">Phospholipid metabolism; phosphatidylethanolamine biosynthesis; phosphatidylethanolamine from CDP-diacylglycerol: step 2/2.</text>
</comment>
<comment type="subunit">
    <text evidence="1">Heterodimer of a large membrane-associated beta subunit and a small pyruvoyl-containing alpha subunit.</text>
</comment>
<comment type="subcellular location">
    <subcellularLocation>
        <location evidence="1">Cell membrane</location>
        <topology evidence="1">Peripheral membrane protein</topology>
    </subcellularLocation>
</comment>
<comment type="PTM">
    <text evidence="1">Is synthesized initially as an inactive proenzyme. Formation of the active enzyme involves a self-maturation process in which the active site pyruvoyl group is generated from an internal serine residue via an autocatalytic post-translational modification. Two non-identical subunits are generated from the proenzyme in this reaction, and the pyruvate is formed at the N-terminus of the alpha chain, which is derived from the carboxyl end of the proenzyme. The post-translation cleavage follows an unusual pathway, termed non-hydrolytic serinolysis, in which the side chain hydroxyl group of the serine supplies its oxygen atom to form the C-terminus of the beta chain, while the remainder of the serine residue undergoes an oxidative deamination to produce ammonia and the pyruvoyl prosthetic group on the alpha chain.</text>
</comment>
<comment type="similarity">
    <text evidence="1">Belongs to the phosphatidylserine decarboxylase family. PSD-A subfamily.</text>
</comment>
<sequence>MSLVDTVKNAFVPIHREGYPFIAACGAGTLFLGYFSSVLFWLGLILTAWCVYFFRDPERVTPVDDRLVVSPADGIISAVGPAVPPRELGLGNVEMTRISVFMNVFSCHVNRSPVRGRIAKIEHRPGKFLNAELDKASTENERNGLVIESPNGTVAAVQIAGLVARRIVCWAEAGGSIGTGERFGLIRFGSRVDVFLPLTATPRVAVGQTAVGGETVLAEFGGVAGTPLVRIS</sequence>
<reference key="1">
    <citation type="journal article" date="2000" name="DNA Res.">
        <title>Complete genome structure of the nitrogen-fixing symbiotic bacterium Mesorhizobium loti.</title>
        <authorList>
            <person name="Kaneko T."/>
            <person name="Nakamura Y."/>
            <person name="Sato S."/>
            <person name="Asamizu E."/>
            <person name="Kato T."/>
            <person name="Sasamoto S."/>
            <person name="Watanabe A."/>
            <person name="Idesawa K."/>
            <person name="Ishikawa A."/>
            <person name="Kawashima K."/>
            <person name="Kimura T."/>
            <person name="Kishida Y."/>
            <person name="Kiyokawa C."/>
            <person name="Kohara M."/>
            <person name="Matsumoto M."/>
            <person name="Matsuno A."/>
            <person name="Mochizuki Y."/>
            <person name="Nakayama S."/>
            <person name="Nakazaki N."/>
            <person name="Shimpo S."/>
            <person name="Sugimoto M."/>
            <person name="Takeuchi C."/>
            <person name="Yamada M."/>
            <person name="Tabata S."/>
        </authorList>
    </citation>
    <scope>NUCLEOTIDE SEQUENCE [LARGE SCALE GENOMIC DNA]</scope>
    <source>
        <strain>LMG 29417 / CECT 9101 / MAFF 303099</strain>
    </source>
</reference>
<evidence type="ECO:0000255" key="1">
    <source>
        <dbReference type="HAMAP-Rule" id="MF_00664"/>
    </source>
</evidence>
<feature type="chain" id="PRO_0000029797" description="Phosphatidylserine decarboxylase beta chain" evidence="1">
    <location>
        <begin position="1"/>
        <end position="189"/>
    </location>
</feature>
<feature type="chain" id="PRO_0000029798" description="Phosphatidylserine decarboxylase alpha chain" evidence="1">
    <location>
        <begin position="190"/>
        <end position="232"/>
    </location>
</feature>
<feature type="active site" description="Schiff-base intermediate with substrate; via pyruvic acid" evidence="1">
    <location>
        <position position="190"/>
    </location>
</feature>
<feature type="site" description="Cleavage (non-hydrolytic); by autocatalysis" evidence="1">
    <location>
        <begin position="189"/>
        <end position="190"/>
    </location>
</feature>
<feature type="modified residue" description="Pyruvic acid (Ser); by autocatalysis" evidence="1">
    <location>
        <position position="190"/>
    </location>
</feature>
<protein>
    <recommendedName>
        <fullName evidence="1">Phosphatidylserine decarboxylase proenzyme</fullName>
        <ecNumber evidence="1">4.1.1.65</ecNumber>
    </recommendedName>
    <component>
        <recommendedName>
            <fullName evidence="1">Phosphatidylserine decarboxylase alpha chain</fullName>
        </recommendedName>
    </component>
    <component>
        <recommendedName>
            <fullName evidence="1">Phosphatidylserine decarboxylase beta chain</fullName>
        </recommendedName>
    </component>
</protein>
<proteinExistence type="inferred from homology"/>
<keyword id="KW-1003">Cell membrane</keyword>
<keyword id="KW-0210">Decarboxylase</keyword>
<keyword id="KW-0444">Lipid biosynthesis</keyword>
<keyword id="KW-0443">Lipid metabolism</keyword>
<keyword id="KW-0456">Lyase</keyword>
<keyword id="KW-0472">Membrane</keyword>
<keyword id="KW-0594">Phospholipid biosynthesis</keyword>
<keyword id="KW-1208">Phospholipid metabolism</keyword>
<keyword id="KW-0670">Pyruvate</keyword>
<keyword id="KW-0865">Zymogen</keyword>
<organism>
    <name type="scientific">Mesorhizobium japonicum (strain LMG 29417 / CECT 9101 / MAFF 303099)</name>
    <name type="common">Mesorhizobium loti (strain MAFF 303099)</name>
    <dbReference type="NCBI Taxonomy" id="266835"/>
    <lineage>
        <taxon>Bacteria</taxon>
        <taxon>Pseudomonadati</taxon>
        <taxon>Pseudomonadota</taxon>
        <taxon>Alphaproteobacteria</taxon>
        <taxon>Hyphomicrobiales</taxon>
        <taxon>Phyllobacteriaceae</taxon>
        <taxon>Mesorhizobium</taxon>
    </lineage>
</organism>